<keyword id="KW-0067">ATP-binding</keyword>
<keyword id="KW-0375">Hydrogen ion transport</keyword>
<keyword id="KW-0406">Ion transport</keyword>
<keyword id="KW-0472">Membrane</keyword>
<keyword id="KW-0547">Nucleotide-binding</keyword>
<keyword id="KW-1185">Reference proteome</keyword>
<keyword id="KW-0813">Transport</keyword>
<keyword id="KW-0926">Vacuole</keyword>
<name>VATB_NEUCR</name>
<comment type="function">
    <text evidence="1">Non-catalytic subunit of the V1 complex of vacuolar(H+)-ATPase (V-ATPase), a multisubunit enzyme composed of a peripheral complex (V1) that hydrolyzes ATP and a membrane integral complex (V0) that translocates protons (By similarity). V-ATPase is responsible for acidifying and maintaining the pH of intracellular compartments (By similarity).</text>
</comment>
<comment type="subunit">
    <text evidence="1">V-ATPase is a heteromultimeric enzyme composed of a peripheral catalytic V1 complex (components A to H) attached to an integral membrane V0 proton pore complex (components: a, c, c', c'', d, e, f and VOA1).</text>
</comment>
<comment type="subcellular location">
    <subcellularLocation>
        <location evidence="1">Vacuole membrane</location>
        <topology evidence="5">Peripheral membrane protein</topology>
        <orientation evidence="5">Cytoplasmic side</orientation>
    </subcellularLocation>
</comment>
<comment type="similarity">
    <text evidence="5">Belongs to the ATPase alpha/beta chains family.</text>
</comment>
<accession>P11593</accession>
<accession>Q7RVH9</accession>
<dbReference type="EMBL" id="J03956">
    <property type="protein sequence ID" value="AAA33622.1"/>
    <property type="molecule type" value="Genomic_DNA"/>
</dbReference>
<dbReference type="EMBL" id="BX842594">
    <property type="protein sequence ID" value="CAE75688.1"/>
    <property type="molecule type" value="Genomic_DNA"/>
</dbReference>
<dbReference type="EMBL" id="CM002237">
    <property type="protein sequence ID" value="EAA33929.1"/>
    <property type="molecule type" value="Genomic_DNA"/>
</dbReference>
<dbReference type="PIR" id="A30800">
    <property type="entry name" value="A30800"/>
</dbReference>
<dbReference type="RefSeq" id="XP_963165.1">
    <property type="nucleotide sequence ID" value="XM_958072.3"/>
</dbReference>
<dbReference type="SMR" id="P11593"/>
<dbReference type="FunCoup" id="P11593">
    <property type="interactions" value="1455"/>
</dbReference>
<dbReference type="STRING" id="367110.P11593"/>
<dbReference type="PaxDb" id="5141-EFNCRP00000008447"/>
<dbReference type="EnsemblFungi" id="EAA33929">
    <property type="protein sequence ID" value="EAA33929"/>
    <property type="gene ID" value="NCU08515"/>
</dbReference>
<dbReference type="GeneID" id="3879313"/>
<dbReference type="KEGG" id="ncr:NCU08515"/>
<dbReference type="VEuPathDB" id="FungiDB:NCU08515"/>
<dbReference type="HOGENOM" id="CLU_022916_3_0_1"/>
<dbReference type="InParanoid" id="P11593"/>
<dbReference type="OMA" id="EGFKIKP"/>
<dbReference type="OrthoDB" id="1735853at2759"/>
<dbReference type="Proteomes" id="UP000001805">
    <property type="component" value="Chromosome 6, Linkage Group II"/>
</dbReference>
<dbReference type="GO" id="GO:0000221">
    <property type="term" value="C:vacuolar proton-transporting V-type ATPase, V1 domain"/>
    <property type="evidence" value="ECO:0000250"/>
    <property type="project" value="UniProtKB"/>
</dbReference>
<dbReference type="GO" id="GO:0005524">
    <property type="term" value="F:ATP binding"/>
    <property type="evidence" value="ECO:0007669"/>
    <property type="project" value="UniProtKB-KW"/>
</dbReference>
<dbReference type="GO" id="GO:0046961">
    <property type="term" value="F:proton-transporting ATPase activity, rotational mechanism"/>
    <property type="evidence" value="ECO:0000318"/>
    <property type="project" value="GO_Central"/>
</dbReference>
<dbReference type="GO" id="GO:0046034">
    <property type="term" value="P:ATP metabolic process"/>
    <property type="evidence" value="ECO:0007669"/>
    <property type="project" value="InterPro"/>
</dbReference>
<dbReference type="GO" id="GO:0007035">
    <property type="term" value="P:vacuolar acidification"/>
    <property type="evidence" value="ECO:0000318"/>
    <property type="project" value="GO_Central"/>
</dbReference>
<dbReference type="CDD" id="cd18112">
    <property type="entry name" value="ATP-synt_V_A-type_beta_C"/>
    <property type="match status" value="1"/>
</dbReference>
<dbReference type="CDD" id="cd18118">
    <property type="entry name" value="ATP-synt_V_A-type_beta_N"/>
    <property type="match status" value="1"/>
</dbReference>
<dbReference type="CDD" id="cd01135">
    <property type="entry name" value="V_A-ATPase_B"/>
    <property type="match status" value="1"/>
</dbReference>
<dbReference type="FunFam" id="3.40.50.12240:FF:000001">
    <property type="entry name" value="V-type proton ATPase subunit B, brain"/>
    <property type="match status" value="1"/>
</dbReference>
<dbReference type="Gene3D" id="3.40.50.12240">
    <property type="match status" value="1"/>
</dbReference>
<dbReference type="HAMAP" id="MF_00310">
    <property type="entry name" value="ATP_synth_B_arch"/>
    <property type="match status" value="1"/>
</dbReference>
<dbReference type="InterPro" id="IPR055190">
    <property type="entry name" value="ATP-synt_VA_C"/>
</dbReference>
<dbReference type="InterPro" id="IPR020003">
    <property type="entry name" value="ATPase_a/bsu_AS"/>
</dbReference>
<dbReference type="InterPro" id="IPR004100">
    <property type="entry name" value="ATPase_F1/V1/A1_a/bsu_N"/>
</dbReference>
<dbReference type="InterPro" id="IPR000194">
    <property type="entry name" value="ATPase_F1/V1/A1_a/bsu_nucl-bd"/>
</dbReference>
<dbReference type="InterPro" id="IPR005723">
    <property type="entry name" value="ATPase_V1-cplx_bsu"/>
</dbReference>
<dbReference type="InterPro" id="IPR027417">
    <property type="entry name" value="P-loop_NTPase"/>
</dbReference>
<dbReference type="InterPro" id="IPR022879">
    <property type="entry name" value="V-ATPase_su_B/beta"/>
</dbReference>
<dbReference type="NCBIfam" id="NF003235">
    <property type="entry name" value="PRK04196.1"/>
    <property type="match status" value="1"/>
</dbReference>
<dbReference type="NCBIfam" id="TIGR01040">
    <property type="entry name" value="V-ATPase_V1_B"/>
    <property type="match status" value="1"/>
</dbReference>
<dbReference type="PANTHER" id="PTHR43389">
    <property type="entry name" value="V-TYPE PROTON ATPASE SUBUNIT B"/>
    <property type="match status" value="1"/>
</dbReference>
<dbReference type="PANTHER" id="PTHR43389:SF4">
    <property type="entry name" value="V-TYPE PROTON ATPASE SUBUNIT B"/>
    <property type="match status" value="1"/>
</dbReference>
<dbReference type="Pfam" id="PF00006">
    <property type="entry name" value="ATP-synt_ab"/>
    <property type="match status" value="1"/>
</dbReference>
<dbReference type="Pfam" id="PF02874">
    <property type="entry name" value="ATP-synt_ab_N"/>
    <property type="match status" value="1"/>
</dbReference>
<dbReference type="Pfam" id="PF22919">
    <property type="entry name" value="ATP-synt_VA_C"/>
    <property type="match status" value="1"/>
</dbReference>
<dbReference type="PIRSF" id="PIRSF039114">
    <property type="entry name" value="V-ATPsynth_beta/V-ATPase_B"/>
    <property type="match status" value="1"/>
</dbReference>
<dbReference type="SUPFAM" id="SSF52540">
    <property type="entry name" value="P-loop containing nucleoside triphosphate hydrolases"/>
    <property type="match status" value="1"/>
</dbReference>
<dbReference type="PROSITE" id="PS00152">
    <property type="entry name" value="ATPASE_ALPHA_BETA"/>
    <property type="match status" value="1"/>
</dbReference>
<reference key="1">
    <citation type="journal article" date="1988" name="J. Biol. Chem.">
        <title>Isolation of genes encoding the Neurospora vacuolar ATPase. Analysis of vma-2 encoding the 57-kDa polypeptide and comparison to vma-1.</title>
        <authorList>
            <person name="Bowman B.J."/>
            <person name="Allen R."/>
            <person name="Wechser M.A."/>
            <person name="Bowman E.J."/>
        </authorList>
    </citation>
    <scope>NUCLEOTIDE SEQUENCE [GENOMIC DNA]</scope>
</reference>
<reference key="2">
    <citation type="journal article" date="2003" name="Nucleic Acids Res.">
        <title>What's in the genome of a filamentous fungus? Analysis of the Neurospora genome sequence.</title>
        <authorList>
            <person name="Mannhaupt G."/>
            <person name="Montrone C."/>
            <person name="Haase D."/>
            <person name="Mewes H.-W."/>
            <person name="Aign V."/>
            <person name="Hoheisel J.D."/>
            <person name="Fartmann B."/>
            <person name="Nyakatura G."/>
            <person name="Kempken F."/>
            <person name="Maier J."/>
            <person name="Schulte U."/>
        </authorList>
    </citation>
    <scope>NUCLEOTIDE SEQUENCE [LARGE SCALE GENOMIC DNA]</scope>
    <source>
        <strain>ATCC 24698 / 74-OR23-1A / CBS 708.71 / DSM 1257 / FGSC 987</strain>
    </source>
</reference>
<reference key="3">
    <citation type="journal article" date="2003" name="Nature">
        <title>The genome sequence of the filamentous fungus Neurospora crassa.</title>
        <authorList>
            <person name="Galagan J.E."/>
            <person name="Calvo S.E."/>
            <person name="Borkovich K.A."/>
            <person name="Selker E.U."/>
            <person name="Read N.D."/>
            <person name="Jaffe D.B."/>
            <person name="FitzHugh W."/>
            <person name="Ma L.-J."/>
            <person name="Smirnov S."/>
            <person name="Purcell S."/>
            <person name="Rehman B."/>
            <person name="Elkins T."/>
            <person name="Engels R."/>
            <person name="Wang S."/>
            <person name="Nielsen C.B."/>
            <person name="Butler J."/>
            <person name="Endrizzi M."/>
            <person name="Qui D."/>
            <person name="Ianakiev P."/>
            <person name="Bell-Pedersen D."/>
            <person name="Nelson M.A."/>
            <person name="Werner-Washburne M."/>
            <person name="Selitrennikoff C.P."/>
            <person name="Kinsey J.A."/>
            <person name="Braun E.L."/>
            <person name="Zelter A."/>
            <person name="Schulte U."/>
            <person name="Kothe G.O."/>
            <person name="Jedd G."/>
            <person name="Mewes H.-W."/>
            <person name="Staben C."/>
            <person name="Marcotte E."/>
            <person name="Greenberg D."/>
            <person name="Roy A."/>
            <person name="Foley K."/>
            <person name="Naylor J."/>
            <person name="Stange-Thomann N."/>
            <person name="Barrett R."/>
            <person name="Gnerre S."/>
            <person name="Kamal M."/>
            <person name="Kamvysselis M."/>
            <person name="Mauceli E.W."/>
            <person name="Bielke C."/>
            <person name="Rudd S."/>
            <person name="Frishman D."/>
            <person name="Krystofova S."/>
            <person name="Rasmussen C."/>
            <person name="Metzenberg R.L."/>
            <person name="Perkins D.D."/>
            <person name="Kroken S."/>
            <person name="Cogoni C."/>
            <person name="Macino G."/>
            <person name="Catcheside D.E.A."/>
            <person name="Li W."/>
            <person name="Pratt R.J."/>
            <person name="Osmani S.A."/>
            <person name="DeSouza C.P.C."/>
            <person name="Glass N.L."/>
            <person name="Orbach M.J."/>
            <person name="Berglund J.A."/>
            <person name="Voelker R."/>
            <person name="Yarden O."/>
            <person name="Plamann M."/>
            <person name="Seiler S."/>
            <person name="Dunlap J.C."/>
            <person name="Radford A."/>
            <person name="Aramayo R."/>
            <person name="Natvig D.O."/>
            <person name="Alex L.A."/>
            <person name="Mannhaupt G."/>
            <person name="Ebbole D.J."/>
            <person name="Freitag M."/>
            <person name="Paulsen I."/>
            <person name="Sachs M.S."/>
            <person name="Lander E.S."/>
            <person name="Nusbaum C."/>
            <person name="Birren B.W."/>
        </authorList>
    </citation>
    <scope>NUCLEOTIDE SEQUENCE [LARGE SCALE GENOMIC DNA]</scope>
    <source>
        <strain>ATCC 24698 / 74-OR23-1A / CBS 708.71 / DSM 1257 / FGSC 987</strain>
    </source>
</reference>
<gene>
    <name evidence="4" type="primary">vma-2</name>
    <name type="ORF">B18P7.150</name>
    <name type="ORF">NCU08515</name>
</gene>
<evidence type="ECO:0000250" key="1">
    <source>
        <dbReference type="UniProtKB" id="P16140"/>
    </source>
</evidence>
<evidence type="ECO:0000250" key="2">
    <source>
        <dbReference type="UniProtKB" id="P21281"/>
    </source>
</evidence>
<evidence type="ECO:0000256" key="3">
    <source>
        <dbReference type="SAM" id="MobiDB-lite"/>
    </source>
</evidence>
<evidence type="ECO:0000303" key="4">
    <source>
    </source>
</evidence>
<evidence type="ECO:0000305" key="5"/>
<proteinExistence type="inferred from homology"/>
<feature type="chain" id="PRO_0000144646" description="V-type proton ATPase subunit B">
    <location>
        <begin position="1"/>
        <end position="513"/>
    </location>
</feature>
<feature type="region of interest" description="Disordered" evidence="3">
    <location>
        <begin position="484"/>
        <end position="513"/>
    </location>
</feature>
<feature type="compositionally biased region" description="Basic and acidic residues" evidence="3">
    <location>
        <begin position="484"/>
        <end position="503"/>
    </location>
</feature>
<feature type="compositionally biased region" description="Acidic residues" evidence="3">
    <location>
        <begin position="504"/>
        <end position="513"/>
    </location>
</feature>
<feature type="binding site" evidence="2">
    <location>
        <position position="375"/>
    </location>
    <ligand>
        <name>ATP</name>
        <dbReference type="ChEBI" id="CHEBI:30616"/>
    </ligand>
</feature>
<organism>
    <name type="scientific">Neurospora crassa (strain ATCC 24698 / 74-OR23-1A / CBS 708.71 / DSM 1257 / FGSC 987)</name>
    <dbReference type="NCBI Taxonomy" id="367110"/>
    <lineage>
        <taxon>Eukaryota</taxon>
        <taxon>Fungi</taxon>
        <taxon>Dikarya</taxon>
        <taxon>Ascomycota</taxon>
        <taxon>Pezizomycotina</taxon>
        <taxon>Sordariomycetes</taxon>
        <taxon>Sordariomycetidae</taxon>
        <taxon>Sordariales</taxon>
        <taxon>Sordariaceae</taxon>
        <taxon>Neurospora</taxon>
    </lineage>
</organism>
<sequence>MADPRVPSSYNVTPRIRYNTVGGVNGPLVILDNVKFPRYNEIVTLTLPDGTQRSGQVLEARGNRAVVQVFEGTSGIDVKKTKVEFTGESLKLGVSEDMLGRIFDGSGRAIDKGPKVLAEEYLDINGSPINPYAREYPQEMISTGISAIDTMNSIARGQKIPIFSAAGLPHNEIAAQICRQAGLVQRQGITNKGVHDGHEENFSIVFGAMGVNLETARFFTRDFEENGSLGRTTLFLNLANDPTIERIITPRLALTTAEYYAYQLEKHVLVILTDLSSYCDALREVSAAREEVPGRRGFPGYMYTDLSTIYERAGRVAGRNGSITQIPILTMPNDDITHPIPDLTGYITEGQIFVDRGLHNRGIYPPINVLPSLSRLMKSAIGEGMTRKDHGDVSNQLYAKYAIGRDAAAMKAVVGEEALSNEDKLSLEFLDKFERSFIAQGPYESRTIFESLDLAWSLLRIYRKDMLNRIPKKIIDEFYSRSAADRKGKGKDKPTTKDTRDTAAPEEENLIDA</sequence>
<protein>
    <recommendedName>
        <fullName evidence="1">V-type proton ATPase subunit B</fullName>
        <shortName>V-ATPase subunit B</shortName>
    </recommendedName>
    <alternativeName>
        <fullName>V-ATPase 57 kDa subunit</fullName>
    </alternativeName>
    <alternativeName>
        <fullName>Vacuolar proton pump subunit B</fullName>
    </alternativeName>
</protein>